<accession>A2C260</accession>
<proteinExistence type="inferred from homology"/>
<feature type="chain" id="PRO_1000115151" description="Large ribosomal subunit protein bL33">
    <location>
        <begin position="1"/>
        <end position="65"/>
    </location>
</feature>
<feature type="region of interest" description="Disordered" evidence="2">
    <location>
        <begin position="17"/>
        <end position="40"/>
    </location>
</feature>
<reference key="1">
    <citation type="journal article" date="2007" name="PLoS Genet.">
        <title>Patterns and implications of gene gain and loss in the evolution of Prochlorococcus.</title>
        <authorList>
            <person name="Kettler G.C."/>
            <person name="Martiny A.C."/>
            <person name="Huang K."/>
            <person name="Zucker J."/>
            <person name="Coleman M.L."/>
            <person name="Rodrigue S."/>
            <person name="Chen F."/>
            <person name="Lapidus A."/>
            <person name="Ferriera S."/>
            <person name="Johnson J."/>
            <person name="Steglich C."/>
            <person name="Church G.M."/>
            <person name="Richardson P."/>
            <person name="Chisholm S.W."/>
        </authorList>
    </citation>
    <scope>NUCLEOTIDE SEQUENCE [LARGE SCALE GENOMIC DNA]</scope>
    <source>
        <strain>NATL1A</strain>
    </source>
</reference>
<evidence type="ECO:0000255" key="1">
    <source>
        <dbReference type="HAMAP-Rule" id="MF_00294"/>
    </source>
</evidence>
<evidence type="ECO:0000256" key="2">
    <source>
        <dbReference type="SAM" id="MobiDB-lite"/>
    </source>
</evidence>
<evidence type="ECO:0000305" key="3"/>
<dbReference type="EMBL" id="CP000553">
    <property type="protein sequence ID" value="ABM75570.1"/>
    <property type="molecule type" value="Genomic_DNA"/>
</dbReference>
<dbReference type="RefSeq" id="WP_011823694.1">
    <property type="nucleotide sequence ID" value="NC_008819.1"/>
</dbReference>
<dbReference type="SMR" id="A2C260"/>
<dbReference type="KEGG" id="pme:NATL1_10121"/>
<dbReference type="eggNOG" id="COG0267">
    <property type="taxonomic scope" value="Bacteria"/>
</dbReference>
<dbReference type="HOGENOM" id="CLU_190949_3_0_3"/>
<dbReference type="Proteomes" id="UP000002592">
    <property type="component" value="Chromosome"/>
</dbReference>
<dbReference type="GO" id="GO:0005737">
    <property type="term" value="C:cytoplasm"/>
    <property type="evidence" value="ECO:0007669"/>
    <property type="project" value="UniProtKB-ARBA"/>
</dbReference>
<dbReference type="GO" id="GO:1990904">
    <property type="term" value="C:ribonucleoprotein complex"/>
    <property type="evidence" value="ECO:0007669"/>
    <property type="project" value="UniProtKB-KW"/>
</dbReference>
<dbReference type="GO" id="GO:0005840">
    <property type="term" value="C:ribosome"/>
    <property type="evidence" value="ECO:0007669"/>
    <property type="project" value="UniProtKB-KW"/>
</dbReference>
<dbReference type="GO" id="GO:0003735">
    <property type="term" value="F:structural constituent of ribosome"/>
    <property type="evidence" value="ECO:0007669"/>
    <property type="project" value="InterPro"/>
</dbReference>
<dbReference type="GO" id="GO:0006412">
    <property type="term" value="P:translation"/>
    <property type="evidence" value="ECO:0007669"/>
    <property type="project" value="UniProtKB-UniRule"/>
</dbReference>
<dbReference type="Gene3D" id="2.20.28.120">
    <property type="entry name" value="Ribosomal protein L33"/>
    <property type="match status" value="1"/>
</dbReference>
<dbReference type="HAMAP" id="MF_00294">
    <property type="entry name" value="Ribosomal_bL33"/>
    <property type="match status" value="1"/>
</dbReference>
<dbReference type="InterPro" id="IPR001705">
    <property type="entry name" value="Ribosomal_bL33"/>
</dbReference>
<dbReference type="InterPro" id="IPR018264">
    <property type="entry name" value="Ribosomal_bL33_CS"/>
</dbReference>
<dbReference type="InterPro" id="IPR038584">
    <property type="entry name" value="Ribosomal_bL33_sf"/>
</dbReference>
<dbReference type="InterPro" id="IPR011332">
    <property type="entry name" value="Ribosomal_zn-bd"/>
</dbReference>
<dbReference type="NCBIfam" id="NF001764">
    <property type="entry name" value="PRK00504.1"/>
    <property type="match status" value="1"/>
</dbReference>
<dbReference type="NCBIfam" id="NF001860">
    <property type="entry name" value="PRK00595.1"/>
    <property type="match status" value="1"/>
</dbReference>
<dbReference type="NCBIfam" id="TIGR01023">
    <property type="entry name" value="rpmG_bact"/>
    <property type="match status" value="1"/>
</dbReference>
<dbReference type="PANTHER" id="PTHR43168">
    <property type="entry name" value="50S RIBOSOMAL PROTEIN L33, CHLOROPLASTIC"/>
    <property type="match status" value="1"/>
</dbReference>
<dbReference type="PANTHER" id="PTHR43168:SF2">
    <property type="entry name" value="LARGE RIBOSOMAL SUBUNIT PROTEIN BL33C"/>
    <property type="match status" value="1"/>
</dbReference>
<dbReference type="Pfam" id="PF00471">
    <property type="entry name" value="Ribosomal_L33"/>
    <property type="match status" value="1"/>
</dbReference>
<dbReference type="SUPFAM" id="SSF57829">
    <property type="entry name" value="Zn-binding ribosomal proteins"/>
    <property type="match status" value="1"/>
</dbReference>
<dbReference type="PROSITE" id="PS00582">
    <property type="entry name" value="RIBOSOMAL_L33"/>
    <property type="match status" value="1"/>
</dbReference>
<keyword id="KW-0687">Ribonucleoprotein</keyword>
<keyword id="KW-0689">Ribosomal protein</keyword>
<protein>
    <recommendedName>
        <fullName evidence="1">Large ribosomal subunit protein bL33</fullName>
    </recommendedName>
    <alternativeName>
        <fullName evidence="3">50S ribosomal protein L33</fullName>
    </alternativeName>
</protein>
<sequence length="65" mass="7555">MAKKGTRIVVTLECTESRSVPSSEKRSAGVSRYTTEKNRRNTTERLELKKFCPELNKMTIHREIK</sequence>
<name>RL33_PROM1</name>
<comment type="similarity">
    <text evidence="1">Belongs to the bacterial ribosomal protein bL33 family.</text>
</comment>
<gene>
    <name evidence="1" type="primary">rpmG</name>
    <name evidence="1" type="synonym">rpl33</name>
    <name type="ordered locus">NATL1_10121</name>
</gene>
<organism>
    <name type="scientific">Prochlorococcus marinus (strain NATL1A)</name>
    <dbReference type="NCBI Taxonomy" id="167555"/>
    <lineage>
        <taxon>Bacteria</taxon>
        <taxon>Bacillati</taxon>
        <taxon>Cyanobacteriota</taxon>
        <taxon>Cyanophyceae</taxon>
        <taxon>Synechococcales</taxon>
        <taxon>Prochlorococcaceae</taxon>
        <taxon>Prochlorococcus</taxon>
    </lineage>
</organism>